<feature type="signal peptide" evidence="3">
    <location>
        <begin position="1"/>
        <end position="18"/>
    </location>
</feature>
<feature type="chain" id="PRO_0000042868" description="Lutropin subunit beta">
    <location>
        <begin position="19"/>
        <end position="141"/>
    </location>
</feature>
<feature type="glycosylation site" description="N-linked (GlcNAc...) asparagine" evidence="2">
    <location>
        <position position="33"/>
    </location>
</feature>
<feature type="disulfide bond" evidence="1">
    <location>
        <begin position="29"/>
        <end position="77"/>
    </location>
</feature>
<feature type="disulfide bond" evidence="1">
    <location>
        <begin position="43"/>
        <end position="92"/>
    </location>
</feature>
<feature type="disulfide bond" evidence="1">
    <location>
        <begin position="46"/>
        <end position="130"/>
    </location>
</feature>
<feature type="disulfide bond" evidence="1">
    <location>
        <begin position="54"/>
        <end position="108"/>
    </location>
</feature>
<feature type="disulfide bond" evidence="1">
    <location>
        <begin position="58"/>
        <end position="110"/>
    </location>
</feature>
<feature type="disulfide bond" evidence="1">
    <location>
        <begin position="113"/>
        <end position="120"/>
    </location>
</feature>
<feature type="sequence conflict" description="In Ref. 2; AA sequence." evidence="4" ref="2">
    <original>AP</original>
    <variation>PA</variation>
    <location>
        <begin position="20"/>
        <end position="21"/>
    </location>
</feature>
<feature type="sequence conflict" description="In Ref. 2; AA sequence." evidence="4" ref="2">
    <original>Q</original>
    <variation>E</variation>
    <location>
        <position position="126"/>
    </location>
</feature>
<accession>Q6IY74</accession>
<accession>Q7M3C7</accession>
<comment type="function">
    <text evidence="1">Promotes spermatogenesis and ovulation by stimulating the testes and ovaries to synthesize steroids.</text>
</comment>
<comment type="subunit">
    <text evidence="1">Heterodimer of a common alpha chain and a unique beta chain which confers biological specificity to thyrotropin, lutropin, follitropin and gonadotropin.</text>
</comment>
<comment type="subcellular location">
    <subcellularLocation>
        <location>Secreted</location>
    </subcellularLocation>
</comment>
<comment type="similarity">
    <text evidence="4">Belongs to the glycoprotein hormones subunit beta family.</text>
</comment>
<evidence type="ECO:0000250" key="1"/>
<evidence type="ECO:0000255" key="2"/>
<evidence type="ECO:0000269" key="3">
    <source ref="2"/>
</evidence>
<evidence type="ECO:0000305" key="4"/>
<protein>
    <recommendedName>
        <fullName>Lutropin subunit beta</fullName>
        <shortName>Lutropin beta chain</shortName>
    </recommendedName>
    <alternativeName>
        <fullName>Luteinizing hormone subunit beta</fullName>
        <shortName>LH-B</shortName>
        <shortName>LSH-B</shortName>
        <shortName>LSH-beta</shortName>
    </alternativeName>
</protein>
<name>LSHB_RABIT</name>
<gene>
    <name type="primary">LHB</name>
</gene>
<reference key="1">
    <citation type="submission" date="2004-04" db="EMBL/GenBank/DDBJ databases">
        <title>Rabbit luteinizing hormone gene.</title>
        <authorList>
            <person name="Suzuki O."/>
        </authorList>
    </citation>
    <scope>NUCLEOTIDE SEQUENCE [GENOMIC DNA / MRNA]</scope>
    <source>
        <strain>Japanese white</strain>
        <strain>New Zealand white</strain>
        <tissue>Pituitary</tissue>
    </source>
</reference>
<reference key="2">
    <citation type="journal article" date="1984" name="J. Protein Chem.">
        <title>The amino acid sequence of the rabbit lutropin beta subunit.</title>
        <authorList>
            <person name="Glenn S.D."/>
            <person name="Nahm H.S."/>
            <person name="Ward D.N."/>
        </authorList>
    </citation>
    <scope>PROTEIN SEQUENCE OF 19-137</scope>
</reference>
<proteinExistence type="evidence at protein level"/>
<sequence length="141" mass="14752">MGTLQGLLLWLLLGTGGAQAPRGPLRPLCRPVNATLAAENEACPVCITFTTSICAGYCPSMVRVLPAALPPVPQPVCTYRELRFASIRLPGCPPGVDPEVSFPVALSCRCGPCRLSSSDCGGPRAQPLACDLPHLPGLLFL</sequence>
<organism>
    <name type="scientific">Oryctolagus cuniculus</name>
    <name type="common">Rabbit</name>
    <dbReference type="NCBI Taxonomy" id="9986"/>
    <lineage>
        <taxon>Eukaryota</taxon>
        <taxon>Metazoa</taxon>
        <taxon>Chordata</taxon>
        <taxon>Craniata</taxon>
        <taxon>Vertebrata</taxon>
        <taxon>Euteleostomi</taxon>
        <taxon>Mammalia</taxon>
        <taxon>Eutheria</taxon>
        <taxon>Euarchontoglires</taxon>
        <taxon>Glires</taxon>
        <taxon>Lagomorpha</taxon>
        <taxon>Leporidae</taxon>
        <taxon>Oryctolagus</taxon>
    </lineage>
</organism>
<keyword id="KW-0903">Direct protein sequencing</keyword>
<keyword id="KW-1015">Disulfide bond</keyword>
<keyword id="KW-0325">Glycoprotein</keyword>
<keyword id="KW-0372">Hormone</keyword>
<keyword id="KW-1185">Reference proteome</keyword>
<keyword id="KW-0964">Secreted</keyword>
<keyword id="KW-0732">Signal</keyword>
<dbReference type="EMBL" id="AB234232">
    <property type="protein sequence ID" value="BAE44302.1"/>
    <property type="molecule type" value="Genomic_DNA"/>
</dbReference>
<dbReference type="EMBL" id="AB235913">
    <property type="protein sequence ID" value="BAE45120.1"/>
    <property type="molecule type" value="mRNA"/>
</dbReference>
<dbReference type="EMBL" id="AY614703">
    <property type="protein sequence ID" value="AAT37165.1"/>
    <property type="molecule type" value="mRNA"/>
</dbReference>
<dbReference type="PIR" id="A61465">
    <property type="entry name" value="A61465"/>
</dbReference>
<dbReference type="RefSeq" id="NP_001076164.1">
    <property type="nucleotide sequence ID" value="NM_001082695.1"/>
</dbReference>
<dbReference type="SMR" id="Q6IY74"/>
<dbReference type="FunCoup" id="Q6IY74">
    <property type="interactions" value="31"/>
</dbReference>
<dbReference type="STRING" id="9986.ENSOCUP00000025405"/>
<dbReference type="GlyCosmos" id="Q6IY74">
    <property type="glycosylation" value="1 site, No reported glycans"/>
</dbReference>
<dbReference type="PaxDb" id="9986-ENSOCUP00000025405"/>
<dbReference type="Ensembl" id="ENSOCUT00000022613.1">
    <property type="protein sequence ID" value="ENSOCUP00000025405.1"/>
    <property type="gene ID" value="ENSOCUG00000026635.1"/>
</dbReference>
<dbReference type="GeneID" id="100009427"/>
<dbReference type="KEGG" id="ocu:100009427"/>
<dbReference type="CTD" id="3972"/>
<dbReference type="eggNOG" id="ENOG502S49V">
    <property type="taxonomic scope" value="Eukaryota"/>
</dbReference>
<dbReference type="GeneTree" id="ENSGT00940000161285"/>
<dbReference type="HOGENOM" id="CLU_126319_0_0_1"/>
<dbReference type="InParanoid" id="Q6IY74"/>
<dbReference type="OMA" id="YHELHFA"/>
<dbReference type="OrthoDB" id="8453657at2759"/>
<dbReference type="TreeFam" id="TF332940"/>
<dbReference type="Proteomes" id="UP000001811">
    <property type="component" value="Unplaced"/>
</dbReference>
<dbReference type="Bgee" id="ENSOCUG00000026635">
    <property type="expression patterns" value="Expressed in skin of back and 6 other cell types or tissues"/>
</dbReference>
<dbReference type="GO" id="GO:0005737">
    <property type="term" value="C:cytoplasm"/>
    <property type="evidence" value="ECO:0007669"/>
    <property type="project" value="TreeGrafter"/>
</dbReference>
<dbReference type="GO" id="GO:0005615">
    <property type="term" value="C:extracellular space"/>
    <property type="evidence" value="ECO:0007669"/>
    <property type="project" value="TreeGrafter"/>
</dbReference>
<dbReference type="GO" id="GO:0005179">
    <property type="term" value="F:hormone activity"/>
    <property type="evidence" value="ECO:0007669"/>
    <property type="project" value="UniProtKB-KW"/>
</dbReference>
<dbReference type="GO" id="GO:0007186">
    <property type="term" value="P:G protein-coupled receptor signaling pathway"/>
    <property type="evidence" value="ECO:0007669"/>
    <property type="project" value="TreeGrafter"/>
</dbReference>
<dbReference type="CDD" id="cd00069">
    <property type="entry name" value="GHB_like"/>
    <property type="match status" value="1"/>
</dbReference>
<dbReference type="FunFam" id="2.10.90.10:FF:000007">
    <property type="entry name" value="Luteinizing hormone beta subunit"/>
    <property type="match status" value="1"/>
</dbReference>
<dbReference type="Gene3D" id="2.10.90.10">
    <property type="entry name" value="Cystine-knot cytokines"/>
    <property type="match status" value="1"/>
</dbReference>
<dbReference type="InterPro" id="IPR029034">
    <property type="entry name" value="Cystine-knot_cytokine"/>
</dbReference>
<dbReference type="InterPro" id="IPR006208">
    <property type="entry name" value="Glyco_hormone_CN"/>
</dbReference>
<dbReference type="InterPro" id="IPR001545">
    <property type="entry name" value="Gonadotropin_bsu"/>
</dbReference>
<dbReference type="InterPro" id="IPR018245">
    <property type="entry name" value="Gonadotropin_bsu_CS"/>
</dbReference>
<dbReference type="PANTHER" id="PTHR11515">
    <property type="entry name" value="GLYCOPROTEIN HORMONE BETA CHAIN"/>
    <property type="match status" value="1"/>
</dbReference>
<dbReference type="PANTHER" id="PTHR11515:SF11">
    <property type="entry name" value="LUTROPIN SUBUNIT BETA"/>
    <property type="match status" value="1"/>
</dbReference>
<dbReference type="Pfam" id="PF00007">
    <property type="entry name" value="Cys_knot"/>
    <property type="match status" value="1"/>
</dbReference>
<dbReference type="SMART" id="SM00068">
    <property type="entry name" value="GHB"/>
    <property type="match status" value="1"/>
</dbReference>
<dbReference type="SUPFAM" id="SSF57501">
    <property type="entry name" value="Cystine-knot cytokines"/>
    <property type="match status" value="1"/>
</dbReference>
<dbReference type="PROSITE" id="PS00261">
    <property type="entry name" value="GLYCO_HORMONE_BETA_1"/>
    <property type="match status" value="1"/>
</dbReference>
<dbReference type="PROSITE" id="PS00689">
    <property type="entry name" value="GLYCO_HORMONE_BETA_2"/>
    <property type="match status" value="1"/>
</dbReference>